<dbReference type="EMBL" id="CM002242">
    <property type="protein sequence ID" value="EAA30358.1"/>
    <property type="molecule type" value="Genomic_DNA"/>
</dbReference>
<dbReference type="RefSeq" id="XP_959594.1">
    <property type="nucleotide sequence ID" value="XM_954501.2"/>
</dbReference>
<dbReference type="SMR" id="Q7S4C1"/>
<dbReference type="FunCoup" id="Q7S4C1">
    <property type="interactions" value="42"/>
</dbReference>
<dbReference type="STRING" id="367110.Q7S4C1"/>
<dbReference type="PaxDb" id="5141-EFNCRP00000003176"/>
<dbReference type="EnsemblFungi" id="EAA30358">
    <property type="protein sequence ID" value="EAA30358"/>
    <property type="gene ID" value="NCU02200"/>
</dbReference>
<dbReference type="GeneID" id="3875741"/>
<dbReference type="KEGG" id="ncr:NCU02200"/>
<dbReference type="VEuPathDB" id="FungiDB:NCU02200"/>
<dbReference type="HOGENOM" id="CLU_045138_1_1_1"/>
<dbReference type="InParanoid" id="Q7S4C1"/>
<dbReference type="OMA" id="MVQIHDY"/>
<dbReference type="OrthoDB" id="75724at2759"/>
<dbReference type="Proteomes" id="UP000001805">
    <property type="component" value="Chromosome 7, Linkage Group VII"/>
</dbReference>
<dbReference type="GO" id="GO:0032541">
    <property type="term" value="C:cortical endoplasmic reticulum"/>
    <property type="evidence" value="ECO:0000318"/>
    <property type="project" value="GO_Central"/>
</dbReference>
<dbReference type="GO" id="GO:0005829">
    <property type="term" value="C:cytosol"/>
    <property type="evidence" value="ECO:0000318"/>
    <property type="project" value="GO_Central"/>
</dbReference>
<dbReference type="GO" id="GO:0005789">
    <property type="term" value="C:endoplasmic reticulum membrane"/>
    <property type="evidence" value="ECO:0007669"/>
    <property type="project" value="UniProtKB-SubCell"/>
</dbReference>
<dbReference type="GO" id="GO:0005886">
    <property type="term" value="C:plasma membrane"/>
    <property type="evidence" value="ECO:0000318"/>
    <property type="project" value="GO_Central"/>
</dbReference>
<dbReference type="GO" id="GO:0046872">
    <property type="term" value="F:metal ion binding"/>
    <property type="evidence" value="ECO:0007669"/>
    <property type="project" value="UniProtKB-KW"/>
</dbReference>
<dbReference type="GO" id="GO:0008526">
    <property type="term" value="F:phosphatidylinositol transfer activity"/>
    <property type="evidence" value="ECO:0000318"/>
    <property type="project" value="GO_Central"/>
</dbReference>
<dbReference type="GO" id="GO:0043001">
    <property type="term" value="P:Golgi to plasma membrane protein transport"/>
    <property type="evidence" value="ECO:0000318"/>
    <property type="project" value="GO_Central"/>
</dbReference>
<dbReference type="GO" id="GO:0017157">
    <property type="term" value="P:regulation of exocytosis"/>
    <property type="evidence" value="ECO:0000318"/>
    <property type="project" value="GO_Central"/>
</dbReference>
<dbReference type="CDD" id="cd00170">
    <property type="entry name" value="SEC14"/>
    <property type="match status" value="1"/>
</dbReference>
<dbReference type="FunFam" id="3.40.525.10:FF:000017">
    <property type="entry name" value="Phosphatidylinositol transfer protein sfh5"/>
    <property type="match status" value="1"/>
</dbReference>
<dbReference type="Gene3D" id="3.40.525.10">
    <property type="entry name" value="CRAL-TRIO lipid binding domain"/>
    <property type="match status" value="1"/>
</dbReference>
<dbReference type="InterPro" id="IPR001251">
    <property type="entry name" value="CRAL-TRIO_dom"/>
</dbReference>
<dbReference type="InterPro" id="IPR036865">
    <property type="entry name" value="CRAL-TRIO_dom_sf"/>
</dbReference>
<dbReference type="InterPro" id="IPR036273">
    <property type="entry name" value="CRAL/TRIO_N_dom_sf"/>
</dbReference>
<dbReference type="InterPro" id="IPR042938">
    <property type="entry name" value="Sfh5"/>
</dbReference>
<dbReference type="PANTHER" id="PTHR47669">
    <property type="entry name" value="PHOSPHATIDYLINOSITOL TRANSFER PROTEIN SFH5"/>
    <property type="match status" value="1"/>
</dbReference>
<dbReference type="PANTHER" id="PTHR47669:SF1">
    <property type="entry name" value="PHOSPHATIDYLINOSITOL TRANSFER PROTEIN SFH5"/>
    <property type="match status" value="1"/>
</dbReference>
<dbReference type="Pfam" id="PF00650">
    <property type="entry name" value="CRAL_TRIO"/>
    <property type="match status" value="1"/>
</dbReference>
<dbReference type="SMART" id="SM00516">
    <property type="entry name" value="SEC14"/>
    <property type="match status" value="1"/>
</dbReference>
<dbReference type="SUPFAM" id="SSF52087">
    <property type="entry name" value="CRAL/TRIO domain"/>
    <property type="match status" value="1"/>
</dbReference>
<dbReference type="SUPFAM" id="SSF46938">
    <property type="entry name" value="CRAL/TRIO N-terminal domain"/>
    <property type="match status" value="1"/>
</dbReference>
<dbReference type="PROSITE" id="PS50191">
    <property type="entry name" value="CRAL_TRIO"/>
    <property type="match status" value="1"/>
</dbReference>
<organism>
    <name type="scientific">Neurospora crassa (strain ATCC 24698 / 74-OR23-1A / CBS 708.71 / DSM 1257 / FGSC 987)</name>
    <dbReference type="NCBI Taxonomy" id="367110"/>
    <lineage>
        <taxon>Eukaryota</taxon>
        <taxon>Fungi</taxon>
        <taxon>Dikarya</taxon>
        <taxon>Ascomycota</taxon>
        <taxon>Pezizomycotina</taxon>
        <taxon>Sordariomycetes</taxon>
        <taxon>Sordariomycetidae</taxon>
        <taxon>Sordariales</taxon>
        <taxon>Sordariaceae</taxon>
        <taxon>Neurospora</taxon>
    </lineage>
</organism>
<protein>
    <recommendedName>
        <fullName>Phosphatidylinositol transfer protein sfh-5</fullName>
        <shortName>PITP sfh-5</shortName>
    </recommendedName>
</protein>
<accession>Q7S4C1</accession>
<keyword id="KW-0963">Cytoplasm</keyword>
<keyword id="KW-0256">Endoplasmic reticulum</keyword>
<keyword id="KW-0349">Heme</keyword>
<keyword id="KW-0408">Iron</keyword>
<keyword id="KW-0445">Lipid transport</keyword>
<keyword id="KW-0472">Membrane</keyword>
<keyword id="KW-0479">Metal-binding</keyword>
<keyword id="KW-0492">Microsome</keyword>
<keyword id="KW-1185">Reference proteome</keyword>
<keyword id="KW-0813">Transport</keyword>
<reference key="1">
    <citation type="journal article" date="2003" name="Nature">
        <title>The genome sequence of the filamentous fungus Neurospora crassa.</title>
        <authorList>
            <person name="Galagan J.E."/>
            <person name="Calvo S.E."/>
            <person name="Borkovich K.A."/>
            <person name="Selker E.U."/>
            <person name="Read N.D."/>
            <person name="Jaffe D.B."/>
            <person name="FitzHugh W."/>
            <person name="Ma L.-J."/>
            <person name="Smirnov S."/>
            <person name="Purcell S."/>
            <person name="Rehman B."/>
            <person name="Elkins T."/>
            <person name="Engels R."/>
            <person name="Wang S."/>
            <person name="Nielsen C.B."/>
            <person name="Butler J."/>
            <person name="Endrizzi M."/>
            <person name="Qui D."/>
            <person name="Ianakiev P."/>
            <person name="Bell-Pedersen D."/>
            <person name="Nelson M.A."/>
            <person name="Werner-Washburne M."/>
            <person name="Selitrennikoff C.P."/>
            <person name="Kinsey J.A."/>
            <person name="Braun E.L."/>
            <person name="Zelter A."/>
            <person name="Schulte U."/>
            <person name="Kothe G.O."/>
            <person name="Jedd G."/>
            <person name="Mewes H.-W."/>
            <person name="Staben C."/>
            <person name="Marcotte E."/>
            <person name="Greenberg D."/>
            <person name="Roy A."/>
            <person name="Foley K."/>
            <person name="Naylor J."/>
            <person name="Stange-Thomann N."/>
            <person name="Barrett R."/>
            <person name="Gnerre S."/>
            <person name="Kamal M."/>
            <person name="Kamvysselis M."/>
            <person name="Mauceli E.W."/>
            <person name="Bielke C."/>
            <person name="Rudd S."/>
            <person name="Frishman D."/>
            <person name="Krystofova S."/>
            <person name="Rasmussen C."/>
            <person name="Metzenberg R.L."/>
            <person name="Perkins D.D."/>
            <person name="Kroken S."/>
            <person name="Cogoni C."/>
            <person name="Macino G."/>
            <person name="Catcheside D.E.A."/>
            <person name="Li W."/>
            <person name="Pratt R.J."/>
            <person name="Osmani S.A."/>
            <person name="DeSouza C.P.C."/>
            <person name="Glass N.L."/>
            <person name="Orbach M.J."/>
            <person name="Berglund J.A."/>
            <person name="Voelker R."/>
            <person name="Yarden O."/>
            <person name="Plamann M."/>
            <person name="Seiler S."/>
            <person name="Dunlap J.C."/>
            <person name="Radford A."/>
            <person name="Aramayo R."/>
            <person name="Natvig D.O."/>
            <person name="Alex L.A."/>
            <person name="Mannhaupt G."/>
            <person name="Ebbole D.J."/>
            <person name="Freitag M."/>
            <person name="Paulsen I."/>
            <person name="Sachs M.S."/>
            <person name="Lander E.S."/>
            <person name="Nusbaum C."/>
            <person name="Birren B.W."/>
        </authorList>
    </citation>
    <scope>NUCLEOTIDE SEQUENCE [LARGE SCALE GENOMIC DNA]</scope>
    <source>
        <strain>ATCC 24698 / 74-OR23-1A / CBS 708.71 / DSM 1257 / FGSC 987</strain>
    </source>
</reference>
<sequence>MSTQPSDSAEPGAAPAAVSTYAGVENTPTVPGSEPDAAKHAEEEPKVVNPTEPQPTAPVDNEPKPAAAPAQEADSPADIKDSVSTTAGELSPLAQLWKAAEGHAHFEIWGVPLSDPERHIPTQIIFQKFLNANEGQVEKAKDQLLKTLDWRQKTQPQQLLRKMFSKAKFDGLGYVTTYTAGDEPAVDEPEQKEVFTWNLYGSVKSLDETFGNLQEFVEWRVALMELGLMEINIGGAIKPITADYDPYKMTQVHDYKGISFLRQTDVAKAASKECIKVLGDNYPELLKEKFFLNIPAIMGFFYGLMKMFVSKKTLNKFHPMSSGTNLAKEFVNTKVDGLGDKLPAEYGGKGADLKTLGKAPIVT</sequence>
<gene>
    <name type="primary">sfh-5</name>
    <name type="ORF">NCU02200</name>
</gene>
<feature type="chain" id="PRO_0000324984" description="Phosphatidylinositol transfer protein sfh-5">
    <location>
        <begin position="1"/>
        <end position="363"/>
    </location>
</feature>
<feature type="domain" description="CRAL-TRIO" evidence="3">
    <location>
        <begin position="180"/>
        <end position="354"/>
    </location>
</feature>
<feature type="region of interest" description="Disordered" evidence="4">
    <location>
        <begin position="1"/>
        <end position="84"/>
    </location>
</feature>
<feature type="compositionally biased region" description="Basic and acidic residues" evidence="4">
    <location>
        <begin position="36"/>
        <end position="46"/>
    </location>
</feature>
<feature type="compositionally biased region" description="Low complexity" evidence="4">
    <location>
        <begin position="64"/>
        <end position="76"/>
    </location>
</feature>
<feature type="binding site" evidence="1">
    <location>
        <position position="200"/>
    </location>
    <ligand>
        <name>heme</name>
        <dbReference type="ChEBI" id="CHEBI:30413"/>
    </ligand>
</feature>
<feature type="binding site" evidence="1">
    <location>
        <position position="220"/>
    </location>
    <ligand>
        <name>heme</name>
        <dbReference type="ChEBI" id="CHEBI:30413"/>
    </ligand>
</feature>
<feature type="binding site" evidence="1">
    <location>
        <position position="253"/>
    </location>
    <ligand>
        <name>heme</name>
        <dbReference type="ChEBI" id="CHEBI:30413"/>
    </ligand>
</feature>
<feature type="binding site" description="proximal binding residue" evidence="1">
    <location>
        <position position="255"/>
    </location>
    <ligand>
        <name>heme</name>
        <dbReference type="ChEBI" id="CHEBI:30413"/>
    </ligand>
    <ligandPart>
        <name>Fe</name>
        <dbReference type="ChEBI" id="CHEBI:18248"/>
    </ligandPart>
</feature>
<feature type="binding site" evidence="1">
    <location>
        <position position="289"/>
    </location>
    <ligand>
        <name>heme</name>
        <dbReference type="ChEBI" id="CHEBI:30413"/>
    </ligand>
</feature>
<evidence type="ECO:0000250" key="1">
    <source>
        <dbReference type="UniProtKB" id="A6ZQI5"/>
    </source>
</evidence>
<evidence type="ECO:0000250" key="2">
    <source>
        <dbReference type="UniProtKB" id="P47008"/>
    </source>
</evidence>
<evidence type="ECO:0000255" key="3">
    <source>
        <dbReference type="PROSITE-ProRule" id="PRU00056"/>
    </source>
</evidence>
<evidence type="ECO:0000256" key="4">
    <source>
        <dbReference type="SAM" id="MobiDB-lite"/>
    </source>
</evidence>
<evidence type="ECO:0000305" key="5"/>
<proteinExistence type="inferred from homology"/>
<comment type="function">
    <text evidence="2">Non-classical phosphatidylinositol (PtdIns) transfer protein (PITP), which exhibits PtdIns-binding/transfer activity in the absence of detectable PtdCho-binding/transfer activity. Regulates PtdIns(4,5)P2 homeostasis at the plasma membrane. Heme-binding protein that may play a role in organic oxidant-induced stress responses.</text>
</comment>
<comment type="catalytic activity">
    <reaction evidence="2">
        <text>a 1,2-diacyl-sn-glycero-3-phospho-(1D-myo-inositol)(in) = a 1,2-diacyl-sn-glycero-3-phospho-(1D-myo-inositol)(out)</text>
        <dbReference type="Rhea" id="RHEA:38691"/>
        <dbReference type="ChEBI" id="CHEBI:57880"/>
    </reaction>
    <physiologicalReaction direction="left-to-right" evidence="2">
        <dbReference type="Rhea" id="RHEA:38692"/>
    </physiologicalReaction>
</comment>
<comment type="cofactor">
    <cofactor evidence="1">
        <name>heme b</name>
        <dbReference type="ChEBI" id="CHEBI:60344"/>
    </cofactor>
</comment>
<comment type="subcellular location">
    <subcellularLocation>
        <location evidence="2">Cytoplasm</location>
    </subcellularLocation>
    <subcellularLocation>
        <location evidence="2">Endoplasmic reticulum membrane</location>
        <topology evidence="2">Peripheral membrane protein</topology>
    </subcellularLocation>
    <subcellularLocation>
        <location evidence="2">Microsome membrane</location>
        <topology evidence="2">Peripheral membrane protein</topology>
    </subcellularLocation>
</comment>
<comment type="similarity">
    <text evidence="5">Belongs to the SFH5 family.</text>
</comment>
<name>SFH5_NEUCR</name>